<feature type="chain" id="PRO_0000092058" description="Cobalt import ATP-binding protein CbiO">
    <location>
        <begin position="1"/>
        <end position="271"/>
    </location>
</feature>
<feature type="domain" description="ABC transporter" evidence="1">
    <location>
        <begin position="2"/>
        <end position="236"/>
    </location>
</feature>
<feature type="binding site" evidence="1">
    <location>
        <begin position="34"/>
        <end position="41"/>
    </location>
    <ligand>
        <name>ATP</name>
        <dbReference type="ChEBI" id="CHEBI:30616"/>
    </ligand>
</feature>
<keyword id="KW-0067">ATP-binding</keyword>
<keyword id="KW-0997">Cell inner membrane</keyword>
<keyword id="KW-1003">Cell membrane</keyword>
<keyword id="KW-0169">Cobalamin biosynthesis</keyword>
<keyword id="KW-0170">Cobalt</keyword>
<keyword id="KW-0171">Cobalt transport</keyword>
<keyword id="KW-0406">Ion transport</keyword>
<keyword id="KW-0472">Membrane</keyword>
<keyword id="KW-0547">Nucleotide-binding</keyword>
<keyword id="KW-1278">Translocase</keyword>
<keyword id="KW-0813">Transport</keyword>
<evidence type="ECO:0000255" key="1">
    <source>
        <dbReference type="HAMAP-Rule" id="MF_01710"/>
    </source>
</evidence>
<comment type="function">
    <text evidence="1">Part of the energy-coupling factor (ECF) transporter complex CbiMNOQ involved in cobalt import. Presumably responsible for energy coupling to the transport system.</text>
</comment>
<comment type="pathway">
    <text evidence="1">Cofactor biosynthesis; adenosylcobalamin biosynthesis.</text>
</comment>
<comment type="subunit">
    <text evidence="1">Forms an energy-coupling factor (ECF) transporter complex composed of an ATP-binding protein (A component, CbiO), a transmembrane protein (T component, CbiQ) and 2 possible substrate-capture proteins (S components, CbiM and CbiN) of unknown stoichimetry.</text>
</comment>
<comment type="subcellular location">
    <subcellularLocation>
        <location evidence="1">Cell inner membrane</location>
        <topology evidence="1">Peripheral membrane protein</topology>
    </subcellularLocation>
</comment>
<comment type="similarity">
    <text evidence="1">Belongs to the ABC transporter superfamily. Cobalt importer (TC 3.A.1.18.1) family.</text>
</comment>
<dbReference type="EC" id="7.-.-.-" evidence="1"/>
<dbReference type="EMBL" id="AL513382">
    <property type="protein sequence ID" value="CAD02381.1"/>
    <property type="molecule type" value="Genomic_DNA"/>
</dbReference>
<dbReference type="EMBL" id="AE014613">
    <property type="protein sequence ID" value="AAO68538.1"/>
    <property type="molecule type" value="Genomic_DNA"/>
</dbReference>
<dbReference type="RefSeq" id="NP_456574.1">
    <property type="nucleotide sequence ID" value="NC_003198.1"/>
</dbReference>
<dbReference type="RefSeq" id="WP_000881535.1">
    <property type="nucleotide sequence ID" value="NZ_WSUR01000002.1"/>
</dbReference>
<dbReference type="SMR" id="Q8Z5N5"/>
<dbReference type="STRING" id="220341.gene:17586136"/>
<dbReference type="KEGG" id="stt:t0854"/>
<dbReference type="KEGG" id="sty:STY2223"/>
<dbReference type="PATRIC" id="fig|220341.7.peg.2242"/>
<dbReference type="eggNOG" id="COG1122">
    <property type="taxonomic scope" value="Bacteria"/>
</dbReference>
<dbReference type="HOGENOM" id="CLU_000604_1_22_6"/>
<dbReference type="OMA" id="TALWITH"/>
<dbReference type="OrthoDB" id="5292475at2"/>
<dbReference type="UniPathway" id="UPA00148"/>
<dbReference type="Proteomes" id="UP000000541">
    <property type="component" value="Chromosome"/>
</dbReference>
<dbReference type="Proteomes" id="UP000002670">
    <property type="component" value="Chromosome"/>
</dbReference>
<dbReference type="GO" id="GO:0043190">
    <property type="term" value="C:ATP-binding cassette (ABC) transporter complex"/>
    <property type="evidence" value="ECO:0007669"/>
    <property type="project" value="TreeGrafter"/>
</dbReference>
<dbReference type="GO" id="GO:0005524">
    <property type="term" value="F:ATP binding"/>
    <property type="evidence" value="ECO:0007669"/>
    <property type="project" value="UniProtKB-KW"/>
</dbReference>
<dbReference type="GO" id="GO:0016887">
    <property type="term" value="F:ATP hydrolysis activity"/>
    <property type="evidence" value="ECO:0007669"/>
    <property type="project" value="InterPro"/>
</dbReference>
<dbReference type="GO" id="GO:0042626">
    <property type="term" value="F:ATPase-coupled transmembrane transporter activity"/>
    <property type="evidence" value="ECO:0007669"/>
    <property type="project" value="TreeGrafter"/>
</dbReference>
<dbReference type="GO" id="GO:0009236">
    <property type="term" value="P:cobalamin biosynthetic process"/>
    <property type="evidence" value="ECO:0007669"/>
    <property type="project" value="UniProtKB-UniPathway"/>
</dbReference>
<dbReference type="GO" id="GO:0006824">
    <property type="term" value="P:cobalt ion transport"/>
    <property type="evidence" value="ECO:0007669"/>
    <property type="project" value="UniProtKB-KW"/>
</dbReference>
<dbReference type="CDD" id="cd03225">
    <property type="entry name" value="ABC_cobalt_CbiO_domain1"/>
    <property type="match status" value="1"/>
</dbReference>
<dbReference type="FunFam" id="3.40.50.300:FF:000224">
    <property type="entry name" value="Energy-coupling factor transporter ATP-binding protein EcfA"/>
    <property type="match status" value="1"/>
</dbReference>
<dbReference type="Gene3D" id="3.40.50.300">
    <property type="entry name" value="P-loop containing nucleotide triphosphate hydrolases"/>
    <property type="match status" value="1"/>
</dbReference>
<dbReference type="InterPro" id="IPR003593">
    <property type="entry name" value="AAA+_ATPase"/>
</dbReference>
<dbReference type="InterPro" id="IPR003439">
    <property type="entry name" value="ABC_transporter-like_ATP-bd"/>
</dbReference>
<dbReference type="InterPro" id="IPR017871">
    <property type="entry name" value="ABC_transporter-like_CS"/>
</dbReference>
<dbReference type="InterPro" id="IPR015856">
    <property type="entry name" value="ABC_transpr_CbiO/EcfA_su"/>
</dbReference>
<dbReference type="InterPro" id="IPR005876">
    <property type="entry name" value="Co_trans_ATP-bd"/>
</dbReference>
<dbReference type="InterPro" id="IPR050095">
    <property type="entry name" value="ECF_ABC_transporter_ATP-bd"/>
</dbReference>
<dbReference type="InterPro" id="IPR027417">
    <property type="entry name" value="P-loop_NTPase"/>
</dbReference>
<dbReference type="NCBIfam" id="TIGR01166">
    <property type="entry name" value="cbiO"/>
    <property type="match status" value="1"/>
</dbReference>
<dbReference type="NCBIfam" id="NF010159">
    <property type="entry name" value="PRK13638.1"/>
    <property type="match status" value="1"/>
</dbReference>
<dbReference type="PANTHER" id="PTHR43553:SF24">
    <property type="entry name" value="ENERGY-COUPLING FACTOR TRANSPORTER ATP-BINDING PROTEIN ECFA1"/>
    <property type="match status" value="1"/>
</dbReference>
<dbReference type="PANTHER" id="PTHR43553">
    <property type="entry name" value="HEAVY METAL TRANSPORTER"/>
    <property type="match status" value="1"/>
</dbReference>
<dbReference type="Pfam" id="PF00005">
    <property type="entry name" value="ABC_tran"/>
    <property type="match status" value="1"/>
</dbReference>
<dbReference type="SMART" id="SM00382">
    <property type="entry name" value="AAA"/>
    <property type="match status" value="1"/>
</dbReference>
<dbReference type="SUPFAM" id="SSF52540">
    <property type="entry name" value="P-loop containing nucleoside triphosphate hydrolases"/>
    <property type="match status" value="1"/>
</dbReference>
<dbReference type="PROSITE" id="PS00211">
    <property type="entry name" value="ABC_TRANSPORTER_1"/>
    <property type="match status" value="1"/>
</dbReference>
<dbReference type="PROSITE" id="PS50893">
    <property type="entry name" value="ABC_TRANSPORTER_2"/>
    <property type="match status" value="1"/>
</dbReference>
<dbReference type="PROSITE" id="PS51246">
    <property type="entry name" value="CBIO"/>
    <property type="match status" value="1"/>
</dbReference>
<name>CBIO_SALTI</name>
<accession>Q8Z5N5</accession>
<accession>Q7CAS2</accession>
<proteinExistence type="inferred from homology"/>
<protein>
    <recommendedName>
        <fullName evidence="1">Cobalt import ATP-binding protein CbiO</fullName>
        <ecNumber evidence="1">7.-.-.-</ecNumber>
    </recommendedName>
    <alternativeName>
        <fullName evidence="1">Energy-coupling factor transporter ATP-binding protein CbiO</fullName>
        <shortName evidence="1">ECF transporter A component CbiO</shortName>
    </alternativeName>
</protein>
<sequence>MLATSDLWFRYQDEPVLKGLNLDFSLSPVTGLVGANGCGKSTLFMNLSGLLRPQKGAVLWQGKPLDYSKRGLLALRQQVATVFQDPEQQIFYTDIDSDIAFSLRNLGVPEAEITRRVDEALTLVDAQHFRHQPIQCLSHGQKKRVAIAGALVLQARYLLLDEPTAGLDPAGRTQMIAIIRRIVAQGNHVIISSHDIDLIYEISDAVYVLRQGQILMHGAPGEVFACTEAMEHAGLTQPWLVKLHTQLGLPLCKTETEFFHRMQKCAFREAS</sequence>
<organism>
    <name type="scientific">Salmonella typhi</name>
    <dbReference type="NCBI Taxonomy" id="90370"/>
    <lineage>
        <taxon>Bacteria</taxon>
        <taxon>Pseudomonadati</taxon>
        <taxon>Pseudomonadota</taxon>
        <taxon>Gammaproteobacteria</taxon>
        <taxon>Enterobacterales</taxon>
        <taxon>Enterobacteriaceae</taxon>
        <taxon>Salmonella</taxon>
    </lineage>
</organism>
<reference key="1">
    <citation type="journal article" date="2001" name="Nature">
        <title>Complete genome sequence of a multiple drug resistant Salmonella enterica serovar Typhi CT18.</title>
        <authorList>
            <person name="Parkhill J."/>
            <person name="Dougan G."/>
            <person name="James K.D."/>
            <person name="Thomson N.R."/>
            <person name="Pickard D."/>
            <person name="Wain J."/>
            <person name="Churcher C.M."/>
            <person name="Mungall K.L."/>
            <person name="Bentley S.D."/>
            <person name="Holden M.T.G."/>
            <person name="Sebaihia M."/>
            <person name="Baker S."/>
            <person name="Basham D."/>
            <person name="Brooks K."/>
            <person name="Chillingworth T."/>
            <person name="Connerton P."/>
            <person name="Cronin A."/>
            <person name="Davis P."/>
            <person name="Davies R.M."/>
            <person name="Dowd L."/>
            <person name="White N."/>
            <person name="Farrar J."/>
            <person name="Feltwell T."/>
            <person name="Hamlin N."/>
            <person name="Haque A."/>
            <person name="Hien T.T."/>
            <person name="Holroyd S."/>
            <person name="Jagels K."/>
            <person name="Krogh A."/>
            <person name="Larsen T.S."/>
            <person name="Leather S."/>
            <person name="Moule S."/>
            <person name="O'Gaora P."/>
            <person name="Parry C."/>
            <person name="Quail M.A."/>
            <person name="Rutherford K.M."/>
            <person name="Simmonds M."/>
            <person name="Skelton J."/>
            <person name="Stevens K."/>
            <person name="Whitehead S."/>
            <person name="Barrell B.G."/>
        </authorList>
    </citation>
    <scope>NUCLEOTIDE SEQUENCE [LARGE SCALE GENOMIC DNA]</scope>
    <source>
        <strain>CT18</strain>
    </source>
</reference>
<reference key="2">
    <citation type="journal article" date="2003" name="J. Bacteriol.">
        <title>Comparative genomics of Salmonella enterica serovar Typhi strains Ty2 and CT18.</title>
        <authorList>
            <person name="Deng W."/>
            <person name="Liou S.-R."/>
            <person name="Plunkett G. III"/>
            <person name="Mayhew G.F."/>
            <person name="Rose D.J."/>
            <person name="Burland V."/>
            <person name="Kodoyianni V."/>
            <person name="Schwartz D.C."/>
            <person name="Blattner F.R."/>
        </authorList>
    </citation>
    <scope>NUCLEOTIDE SEQUENCE [LARGE SCALE GENOMIC DNA]</scope>
    <source>
        <strain>ATCC 700931 / Ty2</strain>
    </source>
</reference>
<gene>
    <name evidence="1" type="primary">cbiO</name>
    <name type="ordered locus">STY2223</name>
    <name type="ordered locus">t0854</name>
</gene>